<reference key="1">
    <citation type="journal article" date="2006" name="Proc. Natl. Acad. Sci. U.S.A.">
        <title>Multireplicon genome architecture of Lactobacillus salivarius.</title>
        <authorList>
            <person name="Claesson M.J."/>
            <person name="Li Y."/>
            <person name="Leahy S."/>
            <person name="Canchaya C."/>
            <person name="van Pijkeren J.P."/>
            <person name="Cerdeno-Tarraga A.M."/>
            <person name="Parkhill J."/>
            <person name="Flynn S."/>
            <person name="O'Sullivan G.C."/>
            <person name="Collins J.K."/>
            <person name="Higgins D."/>
            <person name="Shanahan F."/>
            <person name="Fitzgerald G.F."/>
            <person name="van Sinderen D."/>
            <person name="O'Toole P.W."/>
        </authorList>
    </citation>
    <scope>NUCLEOTIDE SEQUENCE [LARGE SCALE GENOMIC DNA]</scope>
    <source>
        <strain>UCC118</strain>
    </source>
</reference>
<dbReference type="EC" id="2.1.1.199" evidence="1"/>
<dbReference type="EMBL" id="CP000233">
    <property type="protein sequence ID" value="ABD99863.1"/>
    <property type="molecule type" value="Genomic_DNA"/>
</dbReference>
<dbReference type="RefSeq" id="WP_011476142.1">
    <property type="nucleotide sequence ID" value="NC_007929.1"/>
</dbReference>
<dbReference type="RefSeq" id="YP_535946.1">
    <property type="nucleotide sequence ID" value="NC_007929.1"/>
</dbReference>
<dbReference type="SMR" id="Q1WT95"/>
<dbReference type="STRING" id="362948.LSL_1055"/>
<dbReference type="KEGG" id="lsl:LSL_1055"/>
<dbReference type="PATRIC" id="fig|362948.14.peg.1128"/>
<dbReference type="HOGENOM" id="CLU_038422_2_0_9"/>
<dbReference type="OrthoDB" id="9806637at2"/>
<dbReference type="Proteomes" id="UP000006559">
    <property type="component" value="Chromosome"/>
</dbReference>
<dbReference type="GO" id="GO:0005737">
    <property type="term" value="C:cytoplasm"/>
    <property type="evidence" value="ECO:0007669"/>
    <property type="project" value="UniProtKB-SubCell"/>
</dbReference>
<dbReference type="GO" id="GO:0071424">
    <property type="term" value="F:rRNA (cytosine-N4-)-methyltransferase activity"/>
    <property type="evidence" value="ECO:0007669"/>
    <property type="project" value="UniProtKB-UniRule"/>
</dbReference>
<dbReference type="GO" id="GO:0070475">
    <property type="term" value="P:rRNA base methylation"/>
    <property type="evidence" value="ECO:0007669"/>
    <property type="project" value="UniProtKB-UniRule"/>
</dbReference>
<dbReference type="FunFam" id="1.10.150.170:FF:000001">
    <property type="entry name" value="Ribosomal RNA small subunit methyltransferase H"/>
    <property type="match status" value="1"/>
</dbReference>
<dbReference type="Gene3D" id="1.10.150.170">
    <property type="entry name" value="Putative methyltransferase TM0872, insert domain"/>
    <property type="match status" value="1"/>
</dbReference>
<dbReference type="Gene3D" id="3.40.50.150">
    <property type="entry name" value="Vaccinia Virus protein VP39"/>
    <property type="match status" value="1"/>
</dbReference>
<dbReference type="HAMAP" id="MF_01007">
    <property type="entry name" value="16SrRNA_methyltr_H"/>
    <property type="match status" value="1"/>
</dbReference>
<dbReference type="InterPro" id="IPR002903">
    <property type="entry name" value="RsmH"/>
</dbReference>
<dbReference type="InterPro" id="IPR023397">
    <property type="entry name" value="SAM-dep_MeTrfase_MraW_recog"/>
</dbReference>
<dbReference type="InterPro" id="IPR029063">
    <property type="entry name" value="SAM-dependent_MTases_sf"/>
</dbReference>
<dbReference type="NCBIfam" id="TIGR00006">
    <property type="entry name" value="16S rRNA (cytosine(1402)-N(4))-methyltransferase RsmH"/>
    <property type="match status" value="1"/>
</dbReference>
<dbReference type="PANTHER" id="PTHR11265:SF0">
    <property type="entry name" value="12S RRNA N4-METHYLCYTIDINE METHYLTRANSFERASE"/>
    <property type="match status" value="1"/>
</dbReference>
<dbReference type="PANTHER" id="PTHR11265">
    <property type="entry name" value="S-ADENOSYL-METHYLTRANSFERASE MRAW"/>
    <property type="match status" value="1"/>
</dbReference>
<dbReference type="Pfam" id="PF01795">
    <property type="entry name" value="Methyltransf_5"/>
    <property type="match status" value="1"/>
</dbReference>
<dbReference type="PIRSF" id="PIRSF004486">
    <property type="entry name" value="MraW"/>
    <property type="match status" value="1"/>
</dbReference>
<dbReference type="SUPFAM" id="SSF81799">
    <property type="entry name" value="Putative methyltransferase TM0872, insert domain"/>
    <property type="match status" value="1"/>
</dbReference>
<dbReference type="SUPFAM" id="SSF53335">
    <property type="entry name" value="S-adenosyl-L-methionine-dependent methyltransferases"/>
    <property type="match status" value="1"/>
</dbReference>
<keyword id="KW-0963">Cytoplasm</keyword>
<keyword id="KW-0489">Methyltransferase</keyword>
<keyword id="KW-1185">Reference proteome</keyword>
<keyword id="KW-0698">rRNA processing</keyword>
<keyword id="KW-0949">S-adenosyl-L-methionine</keyword>
<keyword id="KW-0808">Transferase</keyword>
<feature type="chain" id="PRO_0000386949" description="Ribosomal RNA small subunit methyltransferase H">
    <location>
        <begin position="1"/>
        <end position="314"/>
    </location>
</feature>
<feature type="binding site" evidence="1">
    <location>
        <begin position="34"/>
        <end position="36"/>
    </location>
    <ligand>
        <name>S-adenosyl-L-methionine</name>
        <dbReference type="ChEBI" id="CHEBI:59789"/>
    </ligand>
</feature>
<feature type="binding site" evidence="1">
    <location>
        <position position="54"/>
    </location>
    <ligand>
        <name>S-adenosyl-L-methionine</name>
        <dbReference type="ChEBI" id="CHEBI:59789"/>
    </ligand>
</feature>
<feature type="binding site" evidence="1">
    <location>
        <position position="83"/>
    </location>
    <ligand>
        <name>S-adenosyl-L-methionine</name>
        <dbReference type="ChEBI" id="CHEBI:59789"/>
    </ligand>
</feature>
<feature type="binding site" evidence="1">
    <location>
        <position position="104"/>
    </location>
    <ligand>
        <name>S-adenosyl-L-methionine</name>
        <dbReference type="ChEBI" id="CHEBI:59789"/>
    </ligand>
</feature>
<feature type="binding site" evidence="1">
    <location>
        <position position="111"/>
    </location>
    <ligand>
        <name>S-adenosyl-L-methionine</name>
        <dbReference type="ChEBI" id="CHEBI:59789"/>
    </ligand>
</feature>
<sequence length="314" mass="35405">MAEFKHITVLLNEAVDGLNIKPDGTYVDCTLGGGGHSGLILSKLSENGKLYSFDQDITAINFNKDKFEEENELGKINFIKSNFRNISEELNKRNILGVDGILYDLGVSSPQFDNADRGFSYNYDAPLDMRMDQSQSLTARDVVNDWSYEQLVRIFFRYGEEKFAKSIARRIEKVRQQTPIETTGQLVDLIKEAIPAKARRKGGHPAKKTFQAIRIAVNDELGALEESLEQALDLLNPGGRISVITFQSLEDRLVKVMFKQKTSLPELPPGLPVIPDSQKVEYKLITRKPIVPSEDEITHNNRAHSAKLRIIEKL</sequence>
<proteinExistence type="inferred from homology"/>
<organism>
    <name type="scientific">Ligilactobacillus salivarius (strain UCC118)</name>
    <name type="common">Lactobacillus salivarius</name>
    <dbReference type="NCBI Taxonomy" id="362948"/>
    <lineage>
        <taxon>Bacteria</taxon>
        <taxon>Bacillati</taxon>
        <taxon>Bacillota</taxon>
        <taxon>Bacilli</taxon>
        <taxon>Lactobacillales</taxon>
        <taxon>Lactobacillaceae</taxon>
        <taxon>Ligilactobacillus</taxon>
    </lineage>
</organism>
<protein>
    <recommendedName>
        <fullName evidence="1">Ribosomal RNA small subunit methyltransferase H</fullName>
        <ecNumber evidence="1">2.1.1.199</ecNumber>
    </recommendedName>
    <alternativeName>
        <fullName evidence="1">16S rRNA m(4)C1402 methyltransferase</fullName>
    </alternativeName>
    <alternativeName>
        <fullName evidence="1">rRNA (cytosine-N(4)-)-methyltransferase RsmH</fullName>
    </alternativeName>
</protein>
<name>RSMH_LIGS1</name>
<comment type="function">
    <text evidence="1">Specifically methylates the N4 position of cytidine in position 1402 (C1402) of 16S rRNA.</text>
</comment>
<comment type="catalytic activity">
    <reaction evidence="1">
        <text>cytidine(1402) in 16S rRNA + S-adenosyl-L-methionine = N(4)-methylcytidine(1402) in 16S rRNA + S-adenosyl-L-homocysteine + H(+)</text>
        <dbReference type="Rhea" id="RHEA:42928"/>
        <dbReference type="Rhea" id="RHEA-COMP:10286"/>
        <dbReference type="Rhea" id="RHEA-COMP:10287"/>
        <dbReference type="ChEBI" id="CHEBI:15378"/>
        <dbReference type="ChEBI" id="CHEBI:57856"/>
        <dbReference type="ChEBI" id="CHEBI:59789"/>
        <dbReference type="ChEBI" id="CHEBI:74506"/>
        <dbReference type="ChEBI" id="CHEBI:82748"/>
        <dbReference type="EC" id="2.1.1.199"/>
    </reaction>
</comment>
<comment type="subcellular location">
    <subcellularLocation>
        <location evidence="1">Cytoplasm</location>
    </subcellularLocation>
</comment>
<comment type="similarity">
    <text evidence="1">Belongs to the methyltransferase superfamily. RsmH family.</text>
</comment>
<gene>
    <name evidence="1" type="primary">rsmH</name>
    <name type="synonym">mraW</name>
    <name type="ordered locus">LSL_1055</name>
</gene>
<evidence type="ECO:0000255" key="1">
    <source>
        <dbReference type="HAMAP-Rule" id="MF_01007"/>
    </source>
</evidence>
<accession>Q1WT95</accession>